<protein>
    <recommendedName>
        <fullName evidence="1">Probable cobalt-precorrin-6B C(15)-methyltransferase (decarboxylating)</fullName>
        <ecNumber evidence="1">2.1.1.196</ecNumber>
    </recommendedName>
</protein>
<comment type="function">
    <text evidence="1">Catalyzes the methylation of C-15 in cobalt-precorrin-6B followed by the decarboxylation of C-12 to form cobalt-precorrin-7.</text>
</comment>
<comment type="catalytic activity">
    <reaction evidence="1">
        <text>Co-precorrin-6B + S-adenosyl-L-methionine = Co-precorrin-7 + S-adenosyl-L-homocysteine + CO2</text>
        <dbReference type="Rhea" id="RHEA:36067"/>
        <dbReference type="ChEBI" id="CHEBI:16526"/>
        <dbReference type="ChEBI" id="CHEBI:57856"/>
        <dbReference type="ChEBI" id="CHEBI:59789"/>
        <dbReference type="ChEBI" id="CHEBI:70791"/>
        <dbReference type="ChEBI" id="CHEBI:72780"/>
        <dbReference type="EC" id="2.1.1.196"/>
    </reaction>
</comment>
<comment type="pathway">
    <text evidence="1">Cofactor biosynthesis; adenosylcobalamin biosynthesis; cob(II)yrinate a,c-diamide from sirohydrochlorin (anaerobic route): step 8/10.</text>
</comment>
<comment type="similarity">
    <text evidence="1">Belongs to the methyltransferase superfamily. Archaeal-type CbiT family.</text>
</comment>
<organism>
    <name type="scientific">Thermoplasma acidophilum (strain ATCC 25905 / DSM 1728 / JCM 9062 / NBRC 15155 / AMRC-C165)</name>
    <dbReference type="NCBI Taxonomy" id="273075"/>
    <lineage>
        <taxon>Archaea</taxon>
        <taxon>Methanobacteriati</taxon>
        <taxon>Thermoplasmatota</taxon>
        <taxon>Thermoplasmata</taxon>
        <taxon>Thermoplasmatales</taxon>
        <taxon>Thermoplasmataceae</taxon>
        <taxon>Thermoplasma</taxon>
    </lineage>
</organism>
<evidence type="ECO:0000255" key="1">
    <source>
        <dbReference type="HAMAP-Rule" id="MF_00786"/>
    </source>
</evidence>
<accession>Q9HKE4</accession>
<sequence length="202" mass="22628">MRMEGENWVYEVRGIPDEFFQRSEGIPMTKREIRIISLSDLRIRPGMRVMDIGCGSGSMTVEISNIIGENGSVTGLDVSGEAADLTMRNCRNLCRFSNYRIVISDVYKYDSDEEFDAVFVGGGTARIHDLFERIERMVHHASRVVVNAIQIHTAYLSLEEMNTRGYSGVNITQVMVSNGMRTSEGYAMIARNPVFIISGDAP</sequence>
<dbReference type="EC" id="2.1.1.196" evidence="1"/>
<dbReference type="EMBL" id="AL445065">
    <property type="protein sequence ID" value="CAC11795.1"/>
    <property type="molecule type" value="Genomic_DNA"/>
</dbReference>
<dbReference type="SMR" id="Q9HKE4"/>
<dbReference type="FunCoup" id="Q9HKE4">
    <property type="interactions" value="57"/>
</dbReference>
<dbReference type="STRING" id="273075.gene:9571877"/>
<dbReference type="PaxDb" id="273075-Ta0657"/>
<dbReference type="EnsemblBacteria" id="CAC11795">
    <property type="protein sequence ID" value="CAC11795"/>
    <property type="gene ID" value="CAC11795"/>
</dbReference>
<dbReference type="KEGG" id="tac:Ta0657"/>
<dbReference type="eggNOG" id="arCOG00977">
    <property type="taxonomic scope" value="Archaea"/>
</dbReference>
<dbReference type="HOGENOM" id="CLU_094143_0_0_2"/>
<dbReference type="InParanoid" id="Q9HKE4"/>
<dbReference type="UniPathway" id="UPA00148">
    <property type="reaction ID" value="UER00229"/>
</dbReference>
<dbReference type="Proteomes" id="UP000001024">
    <property type="component" value="Chromosome"/>
</dbReference>
<dbReference type="GO" id="GO:0043776">
    <property type="term" value="F:cobalt-precorrin-6B C5-methyltransferase activity"/>
    <property type="evidence" value="ECO:0007669"/>
    <property type="project" value="RHEA"/>
</dbReference>
<dbReference type="GO" id="GO:0008276">
    <property type="term" value="F:protein methyltransferase activity"/>
    <property type="evidence" value="ECO:0007669"/>
    <property type="project" value="InterPro"/>
</dbReference>
<dbReference type="GO" id="GO:0019251">
    <property type="term" value="P:anaerobic cobalamin biosynthetic process"/>
    <property type="evidence" value="ECO:0007669"/>
    <property type="project" value="UniProtKB-UniRule"/>
</dbReference>
<dbReference type="GO" id="GO:0032259">
    <property type="term" value="P:methylation"/>
    <property type="evidence" value="ECO:0007669"/>
    <property type="project" value="UniProtKB-KW"/>
</dbReference>
<dbReference type="CDD" id="cd02440">
    <property type="entry name" value="AdoMet_MTases"/>
    <property type="match status" value="1"/>
</dbReference>
<dbReference type="Gene3D" id="3.40.50.150">
    <property type="entry name" value="Vaccinia Virus protein VP39"/>
    <property type="match status" value="1"/>
</dbReference>
<dbReference type="HAMAP" id="MF_00786">
    <property type="entry name" value="CbiT"/>
    <property type="match status" value="1"/>
</dbReference>
<dbReference type="InterPro" id="IPR023475">
    <property type="entry name" value="CbiT"/>
</dbReference>
<dbReference type="InterPro" id="IPR014008">
    <property type="entry name" value="Cbl_synth_MTase_CbiT"/>
</dbReference>
<dbReference type="InterPro" id="IPR050714">
    <property type="entry name" value="Cobalamin_biosynth_MTase"/>
</dbReference>
<dbReference type="InterPro" id="IPR025714">
    <property type="entry name" value="Methyltranfer_dom"/>
</dbReference>
<dbReference type="InterPro" id="IPR029063">
    <property type="entry name" value="SAM-dependent_MTases_sf"/>
</dbReference>
<dbReference type="NCBIfam" id="TIGR02469">
    <property type="entry name" value="CbiT"/>
    <property type="match status" value="1"/>
</dbReference>
<dbReference type="PANTHER" id="PTHR43182">
    <property type="entry name" value="COBALT-PRECORRIN-6B C(15)-METHYLTRANSFERASE (DECARBOXYLATING)"/>
    <property type="match status" value="1"/>
</dbReference>
<dbReference type="PANTHER" id="PTHR43182:SF1">
    <property type="entry name" value="COBALT-PRECORRIN-7 C(5)-METHYLTRANSFERASE"/>
    <property type="match status" value="1"/>
</dbReference>
<dbReference type="Pfam" id="PF13847">
    <property type="entry name" value="Methyltransf_31"/>
    <property type="match status" value="1"/>
</dbReference>
<dbReference type="SUPFAM" id="SSF53335">
    <property type="entry name" value="S-adenosyl-L-methionine-dependent methyltransferases"/>
    <property type="match status" value="1"/>
</dbReference>
<proteinExistence type="inferred from homology"/>
<reference key="1">
    <citation type="journal article" date="2000" name="Nature">
        <title>The genome sequence of the thermoacidophilic scavenger Thermoplasma acidophilum.</title>
        <authorList>
            <person name="Ruepp A."/>
            <person name="Graml W."/>
            <person name="Santos-Martinez M.-L."/>
            <person name="Koretke K.K."/>
            <person name="Volker C."/>
            <person name="Mewes H.-W."/>
            <person name="Frishman D."/>
            <person name="Stocker S."/>
            <person name="Lupas A.N."/>
            <person name="Baumeister W."/>
        </authorList>
    </citation>
    <scope>NUCLEOTIDE SEQUENCE [LARGE SCALE GENOMIC DNA]</scope>
    <source>
        <strain>ATCC 25905 / DSM 1728 / JCM 9062 / NBRC 15155 / AMRC-C165</strain>
    </source>
</reference>
<feature type="chain" id="PRO_0000134946" description="Probable cobalt-precorrin-6B C(15)-methyltransferase (decarboxylating)">
    <location>
        <begin position="1"/>
        <end position="202"/>
    </location>
</feature>
<feature type="binding site" evidence="1">
    <location>
        <position position="29"/>
    </location>
    <ligand>
        <name>S-adenosyl-L-methionine</name>
        <dbReference type="ChEBI" id="CHEBI:59789"/>
    </ligand>
</feature>
<feature type="binding site" evidence="1">
    <location>
        <begin position="53"/>
        <end position="57"/>
    </location>
    <ligand>
        <name>S-adenosyl-L-methionine</name>
        <dbReference type="ChEBI" id="CHEBI:59789"/>
    </ligand>
</feature>
<feature type="binding site" evidence="1">
    <location>
        <position position="77"/>
    </location>
    <ligand>
        <name>S-adenosyl-L-methionine</name>
        <dbReference type="ChEBI" id="CHEBI:59789"/>
    </ligand>
</feature>
<feature type="binding site" evidence="1">
    <location>
        <position position="106"/>
    </location>
    <ligand>
        <name>S-adenosyl-L-methionine</name>
        <dbReference type="ChEBI" id="CHEBI:59789"/>
    </ligand>
</feature>
<gene>
    <name evidence="1" type="primary">cbiT</name>
    <name type="ordered locus">Ta0657</name>
</gene>
<keyword id="KW-0169">Cobalamin biosynthesis</keyword>
<keyword id="KW-0489">Methyltransferase</keyword>
<keyword id="KW-1185">Reference proteome</keyword>
<keyword id="KW-0949">S-adenosyl-L-methionine</keyword>
<keyword id="KW-0808">Transferase</keyword>
<name>CBIT_THEAC</name>